<feature type="chain" id="PRO_0000458471" description="(R)-S-adenosyl-L-methionine hydrolase">
    <location>
        <begin position="1"/>
        <end position="255"/>
    </location>
</feature>
<feature type="binding site" evidence="1">
    <location>
        <position position="9"/>
    </location>
    <ligand>
        <name>adenosine</name>
        <dbReference type="ChEBI" id="CHEBI:16335"/>
    </ligand>
</feature>
<feature type="binding site" evidence="1">
    <location>
        <position position="70"/>
    </location>
    <ligand>
        <name>adenosine</name>
        <dbReference type="ChEBI" id="CHEBI:16335"/>
    </ligand>
</feature>
<feature type="binding site" evidence="1">
    <location>
        <position position="186"/>
    </location>
    <ligand>
        <name>(R)-S-adenosyl-L-methionine</name>
        <dbReference type="ChEBI" id="CHEBI:142093"/>
    </ligand>
</feature>
<feature type="binding site" evidence="1">
    <location>
        <position position="186"/>
    </location>
    <ligand>
        <name>adenosine</name>
        <dbReference type="ChEBI" id="CHEBI:16335"/>
    </ligand>
</feature>
<feature type="binding site" evidence="1">
    <location>
        <position position="227"/>
    </location>
    <ligand>
        <name>(R)-S-adenosyl-L-methionine</name>
        <dbReference type="ChEBI" id="CHEBI:142093"/>
    </ligand>
</feature>
<feature type="binding site" evidence="1">
    <location>
        <position position="232"/>
    </location>
    <ligand>
        <name>(R)-S-adenosyl-L-methionine</name>
        <dbReference type="ChEBI" id="CHEBI:142093"/>
    </ligand>
</feature>
<feature type="binding site" evidence="1">
    <location>
        <position position="235"/>
    </location>
    <ligand>
        <name>(R)-S-adenosyl-L-methionine</name>
        <dbReference type="ChEBI" id="CHEBI:142093"/>
    </ligand>
</feature>
<feature type="binding site" evidence="1">
    <location>
        <position position="235"/>
    </location>
    <ligand>
        <name>adenosine</name>
        <dbReference type="ChEBI" id="CHEBI:16335"/>
    </ligand>
</feature>
<feature type="site" description="Important for activity" evidence="1">
    <location>
        <position position="70"/>
    </location>
</feature>
<feature type="site" description="Important for activity" evidence="1">
    <location>
        <position position="77"/>
    </location>
</feature>
<feature type="site" description="Important for activity" evidence="1">
    <location>
        <position position="133"/>
    </location>
</feature>
<feature type="strand" evidence="7">
    <location>
        <begin position="4"/>
        <end position="10"/>
    </location>
</feature>
<feature type="helix" evidence="7">
    <location>
        <begin position="15"/>
        <end position="24"/>
    </location>
</feature>
<feature type="strand" evidence="7">
    <location>
        <begin position="33"/>
        <end position="38"/>
    </location>
</feature>
<feature type="helix" evidence="7">
    <location>
        <begin position="45"/>
        <end position="55"/>
    </location>
</feature>
<feature type="helix" evidence="7">
    <location>
        <begin position="56"/>
        <end position="58"/>
    </location>
</feature>
<feature type="strand" evidence="7">
    <location>
        <begin position="64"/>
        <end position="68"/>
    </location>
</feature>
<feature type="turn" evidence="7">
    <location>
        <begin position="71"/>
        <end position="74"/>
    </location>
</feature>
<feature type="strand" evidence="7">
    <location>
        <begin position="79"/>
        <end position="94"/>
    </location>
</feature>
<feature type="helix" evidence="7">
    <location>
        <begin position="97"/>
        <end position="102"/>
    </location>
</feature>
<feature type="strand" evidence="7">
    <location>
        <begin position="106"/>
        <end position="110"/>
    </location>
</feature>
<feature type="helix" evidence="7">
    <location>
        <begin position="135"/>
        <end position="137"/>
    </location>
</feature>
<feature type="helix" evidence="7">
    <location>
        <begin position="138"/>
        <end position="146"/>
    </location>
</feature>
<feature type="helix" evidence="7">
    <location>
        <begin position="151"/>
        <end position="154"/>
    </location>
</feature>
<feature type="helix" evidence="7">
    <location>
        <begin position="160"/>
        <end position="162"/>
    </location>
</feature>
<feature type="strand" evidence="7">
    <location>
        <begin position="171"/>
        <end position="181"/>
    </location>
</feature>
<feature type="strand" evidence="7">
    <location>
        <begin position="187"/>
        <end position="192"/>
    </location>
</feature>
<feature type="strand" evidence="7">
    <location>
        <begin position="199"/>
        <end position="202"/>
    </location>
</feature>
<feature type="strand" evidence="7">
    <location>
        <begin position="205"/>
        <end position="209"/>
    </location>
</feature>
<feature type="strand" evidence="7">
    <location>
        <begin position="221"/>
        <end position="225"/>
    </location>
</feature>
<feature type="strand" evidence="7">
    <location>
        <begin position="229"/>
        <end position="235"/>
    </location>
</feature>
<feature type="helix" evidence="7">
    <location>
        <begin position="240"/>
        <end position="243"/>
    </location>
</feature>
<feature type="strand" evidence="7">
    <location>
        <begin position="251"/>
        <end position="254"/>
    </location>
</feature>
<evidence type="ECO:0000250" key="1">
    <source>
        <dbReference type="UniProtKB" id="O58212"/>
    </source>
</evidence>
<evidence type="ECO:0000269" key="2">
    <source>
    </source>
</evidence>
<evidence type="ECO:0000269" key="3">
    <source ref="3"/>
</evidence>
<evidence type="ECO:0000305" key="4"/>
<evidence type="ECO:0000312" key="5">
    <source>
        <dbReference type="EMBL" id="BAD70161.1"/>
    </source>
</evidence>
<evidence type="ECO:0007744" key="6">
    <source>
        <dbReference type="PDB" id="2CW5"/>
    </source>
</evidence>
<evidence type="ECO:0007829" key="7">
    <source>
        <dbReference type="PDB" id="2CW5"/>
    </source>
</evidence>
<protein>
    <recommendedName>
        <fullName evidence="4">(R)-S-adenosyl-L-methionine hydrolase</fullName>
        <ecNumber evidence="2">3.13.2.3</ecNumber>
    </recommendedName>
    <alternativeName>
        <fullName evidence="4">S-adenosyl-L-methionine hydrolase (adenosine-forming)</fullName>
        <shortName evidence="4">SAM hydrolase (adenosine-forming)</shortName>
    </alternativeName>
</protein>
<dbReference type="EC" id="3.13.2.3" evidence="2"/>
<dbReference type="EMBL" id="AP008226">
    <property type="protein sequence ID" value="BAD70161.1"/>
    <property type="molecule type" value="Genomic_DNA"/>
</dbReference>
<dbReference type="RefSeq" id="WP_011227867.1">
    <property type="nucleotide sequence ID" value="NC_006461.1"/>
</dbReference>
<dbReference type="RefSeq" id="YP_143604.1">
    <property type="nucleotide sequence ID" value="NC_006461.1"/>
</dbReference>
<dbReference type="PDB" id="2CW5">
    <property type="method" value="X-ray"/>
    <property type="resolution" value="1.94 A"/>
    <property type="chains" value="A/B/C=1-255"/>
</dbReference>
<dbReference type="PDBsum" id="2CW5"/>
<dbReference type="SMR" id="Q5SLF5"/>
<dbReference type="EnsemblBacteria" id="BAD70161">
    <property type="protein sequence ID" value="BAD70161"/>
    <property type="gene ID" value="BAD70161"/>
</dbReference>
<dbReference type="GeneID" id="3168872"/>
<dbReference type="KEGG" id="ttj:TTHA0338"/>
<dbReference type="PATRIC" id="fig|300852.9.peg.338"/>
<dbReference type="eggNOG" id="COG1912">
    <property type="taxonomic scope" value="Bacteria"/>
</dbReference>
<dbReference type="HOGENOM" id="CLU_059734_1_1_0"/>
<dbReference type="PhylomeDB" id="Q5SLF5"/>
<dbReference type="EvolutionaryTrace" id="Q5SLF5"/>
<dbReference type="Proteomes" id="UP000000532">
    <property type="component" value="Chromosome"/>
</dbReference>
<dbReference type="GO" id="GO:0016787">
    <property type="term" value="F:hydrolase activity"/>
    <property type="evidence" value="ECO:0007669"/>
    <property type="project" value="UniProtKB-KW"/>
</dbReference>
<dbReference type="Gene3D" id="2.40.30.90">
    <property type="entry name" value="Bacterial fluorinating enzyme like"/>
    <property type="match status" value="1"/>
</dbReference>
<dbReference type="Gene3D" id="3.40.50.10790">
    <property type="entry name" value="S-adenosyl-l-methionine hydroxide adenosyltransferase, N-terminal"/>
    <property type="match status" value="1"/>
</dbReference>
<dbReference type="InterPro" id="IPR046470">
    <property type="entry name" value="SAM_HAT_C"/>
</dbReference>
<dbReference type="InterPro" id="IPR046469">
    <property type="entry name" value="SAM_HAT_N"/>
</dbReference>
<dbReference type="InterPro" id="IPR002747">
    <property type="entry name" value="SAM_OH_AdoTrfase"/>
</dbReference>
<dbReference type="InterPro" id="IPR023227">
    <property type="entry name" value="SAM_OH_AdoTrfase_C_sf"/>
</dbReference>
<dbReference type="InterPro" id="IPR023228">
    <property type="entry name" value="SAM_OH_AdoTrfase_N_sf"/>
</dbReference>
<dbReference type="PANTHER" id="PTHR35092">
    <property type="entry name" value="CHLORINASE MJ1651"/>
    <property type="match status" value="1"/>
</dbReference>
<dbReference type="PANTHER" id="PTHR35092:SF1">
    <property type="entry name" value="CHLORINASE MJ1651"/>
    <property type="match status" value="1"/>
</dbReference>
<dbReference type="Pfam" id="PF20257">
    <property type="entry name" value="SAM_HAT_C"/>
    <property type="match status" value="1"/>
</dbReference>
<dbReference type="Pfam" id="PF01887">
    <property type="entry name" value="SAM_HAT_N"/>
    <property type="match status" value="1"/>
</dbReference>
<dbReference type="PIRSF" id="PIRSF006779">
    <property type="entry name" value="UCP006779"/>
    <property type="match status" value="1"/>
</dbReference>
<dbReference type="SUPFAM" id="SSF101852">
    <property type="entry name" value="Bacterial fluorinating enzyme, C-terminal domain"/>
    <property type="match status" value="1"/>
</dbReference>
<dbReference type="SUPFAM" id="SSF102522">
    <property type="entry name" value="Bacterial fluorinating enzyme, N-terminal domain"/>
    <property type="match status" value="1"/>
</dbReference>
<name>RSAMH_THET8</name>
<comment type="function">
    <text evidence="2">Catalyzes the hydrolysis of S-adenosyl-L-methionine (SAM) into adenosine and L-methionine (PubMed:36996195). Does not have chlorinase or fluorinase activity (PubMed:36996195).</text>
</comment>
<comment type="catalytic activity">
    <reaction evidence="2">
        <text>(R)-S-adenosyl-L-methionine + H2O = adenosine + L-methionine + H(+)</text>
        <dbReference type="Rhea" id="RHEA:67240"/>
        <dbReference type="ChEBI" id="CHEBI:15377"/>
        <dbReference type="ChEBI" id="CHEBI:15378"/>
        <dbReference type="ChEBI" id="CHEBI:16335"/>
        <dbReference type="ChEBI" id="CHEBI:57844"/>
        <dbReference type="ChEBI" id="CHEBI:142093"/>
        <dbReference type="EC" id="3.13.2.3"/>
    </reaction>
</comment>
<comment type="biophysicochemical properties">
    <kinetics>
        <KM evidence="2">138 uM for S-adenosyl-L-methionine</KM>
        <text evidence="2">kcat is 2.775 min(-1).</text>
    </kinetics>
</comment>
<comment type="subunit">
    <text evidence="3">Homotrimer.</text>
</comment>
<comment type="similarity">
    <text evidence="4">Belongs to the SAM hydrolase / SAM-dependent halogenase family.</text>
</comment>
<sequence length="255" mass="26946">MRPVYFLSDFGLEDPYVAVVKAVLAERAPGPAVVDLAHALPPQDLRRAAYALFEALPYLPEGAVVLAVVDPGVGTARRAVAALGRWTYVGPDNGLFTLAWLLDPPRRAFLLEPPRPRPKAALPGWAPGEATFHGRDVFAPAAAHLALGLPPEGLGPEVPVETLARLPLALTEGPEGEVLTFDRFGNAITTLLRAPVGGFVEVGGRRVPVRRTFGEVPEGAPVAYLGSAGLLEVAVNRGSAREALGLKEGMPVRLL</sequence>
<keyword id="KW-0002">3D-structure</keyword>
<keyword id="KW-0378">Hydrolase</keyword>
<keyword id="KW-1185">Reference proteome</keyword>
<keyword id="KW-0949">S-adenosyl-L-methionine</keyword>
<organism>
    <name type="scientific">Thermus thermophilus (strain ATCC 27634 / DSM 579 / HB8)</name>
    <dbReference type="NCBI Taxonomy" id="300852"/>
    <lineage>
        <taxon>Bacteria</taxon>
        <taxon>Thermotogati</taxon>
        <taxon>Deinococcota</taxon>
        <taxon>Deinococci</taxon>
        <taxon>Thermales</taxon>
        <taxon>Thermaceae</taxon>
        <taxon>Thermus</taxon>
    </lineage>
</organism>
<reference key="1">
    <citation type="submission" date="2004-11" db="EMBL/GenBank/DDBJ databases">
        <title>Complete genome sequence of Thermus thermophilus HB8.</title>
        <authorList>
            <person name="Masui R."/>
            <person name="Kurokawa K."/>
            <person name="Nakagawa N."/>
            <person name="Tokunaga F."/>
            <person name="Koyama Y."/>
            <person name="Shibata T."/>
            <person name="Oshima T."/>
            <person name="Yokoyama S."/>
            <person name="Yasunaga T."/>
            <person name="Kuramitsu S."/>
        </authorList>
    </citation>
    <scope>NUCLEOTIDE SEQUENCE [LARGE SCALE GENOMIC DNA]</scope>
    <source>
        <strain>ATCC 27634 / DSM 579 / HB8</strain>
    </source>
</reference>
<reference key="2">
    <citation type="journal article" date="2023" name="Science">
        <title>Enzyme function prediction using contrastive learning.</title>
        <authorList>
            <person name="Yu T."/>
            <person name="Cui H."/>
            <person name="Li J.C."/>
            <person name="Luo Y."/>
            <person name="Jiang G."/>
            <person name="Zhao H."/>
        </authorList>
    </citation>
    <scope>FUNCTION</scope>
    <scope>CATALYTIC ACTIVITY</scope>
    <scope>BIOPHYSICOCHEMICAL PROPERTIES</scope>
</reference>
<reference evidence="6" key="3">
    <citation type="submission" date="2005-06" db="PDB data bank">
        <title>Crystal structure of a conserved hypothetical protein from Thermus thermophilus HB8.</title>
        <authorList>
            <person name="Ebihara A."/>
            <person name="Yokoyama S."/>
            <person name="Kuramitsu S."/>
        </authorList>
    </citation>
    <scope>X-RAY CRYSTALLOGRAPHY (1.94 ANGSTROMS)</scope>
    <scope>SUBUNIT</scope>
    <source>
        <strain>ATCC 27634 / DSM 579 / HB8</strain>
    </source>
</reference>
<proteinExistence type="evidence at protein level"/>
<accession>Q5SLF5</accession>
<gene>
    <name evidence="5" type="ordered locus">TTHA0338</name>
</gene>